<sequence length="399" mass="44028">MMAGFAQTTITKINQFYERWMPRLPAEMTARNVLVFCVVCLLCIGSVMVASASMPYAEYMHENPFHYVVRHAISIATAAIVAYLVYKVPLNVWFKNTFSFWLITILLLLAVLVIGTEVNGSRRWIRLAGFTLQPTEVAKVMMAIFTADYVVRRAKEVRTHWKGLVRLSGVMAITVGLIIAEPDLGATVVIVLMMVGIFFLAGAPPTQFAIMLGAVVMGIGFLILFEPYRLARAMSFTNPWADPLGTGYQLSNALMAFGRGEWFGTGLGHSVQKLSYLPEAHTDFMLAVLGEEFGFVGISIVIGLSFIMLACCIKIGHRALKHNFLRAGYLAYGISIIFLLQIIVNAGMNMGLMPTKGLTLPFISYGGTSLMMCAAMISLILRIDASTQEINPDREESNF</sequence>
<proteinExistence type="inferred from homology"/>
<feature type="chain" id="PRO_0000415168" description="Probable peptidoglycan glycosyltransferase FtsW">
    <location>
        <begin position="1"/>
        <end position="399"/>
    </location>
</feature>
<feature type="topological domain" description="Cytoplasmic" evidence="1">
    <location>
        <begin position="1"/>
        <end position="32"/>
    </location>
</feature>
<feature type="transmembrane region" description="Helical" evidence="2">
    <location>
        <begin position="33"/>
        <end position="53"/>
    </location>
</feature>
<feature type="topological domain" description="Periplasmic" evidence="1">
    <location>
        <begin position="54"/>
        <end position="72"/>
    </location>
</feature>
<feature type="transmembrane region" description="Helical" evidence="2">
    <location>
        <begin position="73"/>
        <end position="93"/>
    </location>
</feature>
<feature type="topological domain" description="Cytoplasmic" evidence="1">
    <location>
        <begin position="94"/>
        <end position="97"/>
    </location>
</feature>
<feature type="transmembrane region" description="Helical" evidence="2">
    <location>
        <begin position="98"/>
        <end position="118"/>
    </location>
</feature>
<feature type="topological domain" description="Periplasmic" evidence="1">
    <location>
        <begin position="119"/>
        <end position="126"/>
    </location>
</feature>
<feature type="transmembrane region" description="Helical" evidence="2">
    <location>
        <begin position="127"/>
        <end position="147"/>
    </location>
</feature>
<feature type="topological domain" description="Cytoplasmic" evidence="1">
    <location>
        <begin position="148"/>
        <end position="159"/>
    </location>
</feature>
<feature type="transmembrane region" description="Helical" evidence="2">
    <location>
        <begin position="160"/>
        <end position="180"/>
    </location>
</feature>
<feature type="topological domain" description="Periplasmic" evidence="1">
    <location>
        <begin position="181"/>
        <end position="183"/>
    </location>
</feature>
<feature type="transmembrane region" description="Helical" evidence="2">
    <location>
        <begin position="184"/>
        <end position="204"/>
    </location>
</feature>
<feature type="topological domain" description="Cytoplasmic" evidence="1">
    <location>
        <begin position="205"/>
        <end position="207"/>
    </location>
</feature>
<feature type="transmembrane region" description="Helical" evidence="2">
    <location>
        <begin position="208"/>
        <end position="228"/>
    </location>
</feature>
<feature type="topological domain" description="Periplasmic" evidence="1">
    <location>
        <begin position="229"/>
        <end position="292"/>
    </location>
</feature>
<feature type="transmembrane region" description="Helical" evidence="2">
    <location>
        <begin position="293"/>
        <end position="313"/>
    </location>
</feature>
<feature type="topological domain" description="Cytoplasmic" evidence="1">
    <location>
        <begin position="314"/>
        <end position="327"/>
    </location>
</feature>
<feature type="transmembrane region" description="Helical" evidence="2">
    <location>
        <begin position="328"/>
        <end position="348"/>
    </location>
</feature>
<feature type="topological domain" description="Periplasmic" evidence="1">
    <location>
        <begin position="349"/>
        <end position="359"/>
    </location>
</feature>
<feature type="transmembrane region" description="Helical" evidence="2">
    <location>
        <begin position="360"/>
        <end position="380"/>
    </location>
</feature>
<feature type="topological domain" description="Cytoplasmic" evidence="1">
    <location>
        <begin position="381"/>
        <end position="399"/>
    </location>
</feature>
<protein>
    <recommendedName>
        <fullName evidence="2">Probable peptidoglycan glycosyltransferase FtsW</fullName>
        <shortName evidence="2">PGT</shortName>
        <ecNumber evidence="2">2.4.99.28</ecNumber>
    </recommendedName>
    <alternativeName>
        <fullName evidence="2">Cell division protein FtsW</fullName>
    </alternativeName>
    <alternativeName>
        <fullName evidence="2">Cell wall polymerase</fullName>
    </alternativeName>
    <alternativeName>
        <fullName evidence="2">Peptidoglycan polymerase</fullName>
        <shortName evidence="2">PG polymerase</shortName>
    </alternativeName>
</protein>
<reference key="1">
    <citation type="journal article" date="2004" name="Nucleic Acids Res.">
        <title>Unique features revealed by the genome sequence of Acinetobacter sp. ADP1, a versatile and naturally transformation competent bacterium.</title>
        <authorList>
            <person name="Barbe V."/>
            <person name="Vallenet D."/>
            <person name="Fonknechten N."/>
            <person name="Kreimeyer A."/>
            <person name="Oztas S."/>
            <person name="Labarre L."/>
            <person name="Cruveiller S."/>
            <person name="Robert C."/>
            <person name="Duprat S."/>
            <person name="Wincker P."/>
            <person name="Ornston L.N."/>
            <person name="Weissenbach J."/>
            <person name="Marliere P."/>
            <person name="Cohen G.N."/>
            <person name="Medigue C."/>
        </authorList>
    </citation>
    <scope>NUCLEOTIDE SEQUENCE [LARGE SCALE GENOMIC DNA]</scope>
    <source>
        <strain>ATCC 33305 / BD413 / ADP1</strain>
    </source>
</reference>
<name>FTSW_ACIAD</name>
<evidence type="ECO:0000255" key="1"/>
<evidence type="ECO:0000255" key="2">
    <source>
        <dbReference type="HAMAP-Rule" id="MF_00913"/>
    </source>
</evidence>
<organism>
    <name type="scientific">Acinetobacter baylyi (strain ATCC 33305 / BD413 / ADP1)</name>
    <dbReference type="NCBI Taxonomy" id="62977"/>
    <lineage>
        <taxon>Bacteria</taxon>
        <taxon>Pseudomonadati</taxon>
        <taxon>Pseudomonadota</taxon>
        <taxon>Gammaproteobacteria</taxon>
        <taxon>Moraxellales</taxon>
        <taxon>Moraxellaceae</taxon>
        <taxon>Acinetobacter</taxon>
    </lineage>
</organism>
<gene>
    <name evidence="2" type="primary">ftsW</name>
    <name type="ordered locus">ACIAD0271</name>
</gene>
<comment type="function">
    <text evidence="2">Peptidoglycan polymerase that is essential for cell division.</text>
</comment>
<comment type="catalytic activity">
    <reaction evidence="2">
        <text>[GlcNAc-(1-&gt;4)-Mur2Ac(oyl-L-Ala-gamma-D-Glu-L-Lys-D-Ala-D-Ala)](n)-di-trans,octa-cis-undecaprenyl diphosphate + beta-D-GlcNAc-(1-&gt;4)-Mur2Ac(oyl-L-Ala-gamma-D-Glu-L-Lys-D-Ala-D-Ala)-di-trans,octa-cis-undecaprenyl diphosphate = [GlcNAc-(1-&gt;4)-Mur2Ac(oyl-L-Ala-gamma-D-Glu-L-Lys-D-Ala-D-Ala)](n+1)-di-trans,octa-cis-undecaprenyl diphosphate + di-trans,octa-cis-undecaprenyl diphosphate + H(+)</text>
        <dbReference type="Rhea" id="RHEA:23708"/>
        <dbReference type="Rhea" id="RHEA-COMP:9602"/>
        <dbReference type="Rhea" id="RHEA-COMP:9603"/>
        <dbReference type="ChEBI" id="CHEBI:15378"/>
        <dbReference type="ChEBI" id="CHEBI:58405"/>
        <dbReference type="ChEBI" id="CHEBI:60033"/>
        <dbReference type="ChEBI" id="CHEBI:78435"/>
        <dbReference type="EC" id="2.4.99.28"/>
    </reaction>
</comment>
<comment type="pathway">
    <text evidence="2">Cell wall biogenesis; peptidoglycan biosynthesis.</text>
</comment>
<comment type="subcellular location">
    <subcellularLocation>
        <location evidence="2">Cell inner membrane</location>
        <topology evidence="2">Multi-pass membrane protein</topology>
    </subcellularLocation>
    <text evidence="2">Localizes to the division septum.</text>
</comment>
<comment type="similarity">
    <text evidence="2">Belongs to the SEDS family. FtsW subfamily.</text>
</comment>
<accession>Q6FFC1</accession>
<keyword id="KW-0131">Cell cycle</keyword>
<keyword id="KW-0132">Cell division</keyword>
<keyword id="KW-0997">Cell inner membrane</keyword>
<keyword id="KW-1003">Cell membrane</keyword>
<keyword id="KW-0133">Cell shape</keyword>
<keyword id="KW-0961">Cell wall biogenesis/degradation</keyword>
<keyword id="KW-0328">Glycosyltransferase</keyword>
<keyword id="KW-0472">Membrane</keyword>
<keyword id="KW-0573">Peptidoglycan synthesis</keyword>
<keyword id="KW-0808">Transferase</keyword>
<keyword id="KW-0812">Transmembrane</keyword>
<keyword id="KW-1133">Transmembrane helix</keyword>
<dbReference type="EC" id="2.4.99.28" evidence="2"/>
<dbReference type="EMBL" id="CR543861">
    <property type="protein sequence ID" value="CAG67236.1"/>
    <property type="molecule type" value="Genomic_DNA"/>
</dbReference>
<dbReference type="SMR" id="Q6FFC1"/>
<dbReference type="STRING" id="202950.GCA_001485005_00545"/>
<dbReference type="KEGG" id="aci:ACIAD0271"/>
<dbReference type="eggNOG" id="COG0772">
    <property type="taxonomic scope" value="Bacteria"/>
</dbReference>
<dbReference type="HOGENOM" id="CLU_029243_1_1_6"/>
<dbReference type="UniPathway" id="UPA00219"/>
<dbReference type="Proteomes" id="UP000000430">
    <property type="component" value="Chromosome"/>
</dbReference>
<dbReference type="GO" id="GO:0032153">
    <property type="term" value="C:cell division site"/>
    <property type="evidence" value="ECO:0007669"/>
    <property type="project" value="UniProtKB-UniRule"/>
</dbReference>
<dbReference type="GO" id="GO:0005886">
    <property type="term" value="C:plasma membrane"/>
    <property type="evidence" value="ECO:0007669"/>
    <property type="project" value="UniProtKB-SubCell"/>
</dbReference>
<dbReference type="GO" id="GO:0015648">
    <property type="term" value="F:lipid-linked peptidoglycan transporter activity"/>
    <property type="evidence" value="ECO:0007669"/>
    <property type="project" value="TreeGrafter"/>
</dbReference>
<dbReference type="GO" id="GO:0008955">
    <property type="term" value="F:peptidoglycan glycosyltransferase activity"/>
    <property type="evidence" value="ECO:0007669"/>
    <property type="project" value="UniProtKB-UniRule"/>
</dbReference>
<dbReference type="GO" id="GO:0071555">
    <property type="term" value="P:cell wall organization"/>
    <property type="evidence" value="ECO:0007669"/>
    <property type="project" value="UniProtKB-KW"/>
</dbReference>
<dbReference type="GO" id="GO:0043093">
    <property type="term" value="P:FtsZ-dependent cytokinesis"/>
    <property type="evidence" value="ECO:0007669"/>
    <property type="project" value="UniProtKB-UniRule"/>
</dbReference>
<dbReference type="GO" id="GO:0009252">
    <property type="term" value="P:peptidoglycan biosynthetic process"/>
    <property type="evidence" value="ECO:0007669"/>
    <property type="project" value="UniProtKB-UniRule"/>
</dbReference>
<dbReference type="GO" id="GO:0008360">
    <property type="term" value="P:regulation of cell shape"/>
    <property type="evidence" value="ECO:0007669"/>
    <property type="project" value="UniProtKB-KW"/>
</dbReference>
<dbReference type="HAMAP" id="MF_00913">
    <property type="entry name" value="PGT_FtsW_proteobact"/>
    <property type="match status" value="1"/>
</dbReference>
<dbReference type="InterPro" id="IPR018365">
    <property type="entry name" value="Cell_cycle_FtsW-rel_CS"/>
</dbReference>
<dbReference type="InterPro" id="IPR013437">
    <property type="entry name" value="FtsW"/>
</dbReference>
<dbReference type="InterPro" id="IPR001182">
    <property type="entry name" value="FtsW/RodA"/>
</dbReference>
<dbReference type="NCBIfam" id="TIGR02614">
    <property type="entry name" value="ftsW"/>
    <property type="match status" value="1"/>
</dbReference>
<dbReference type="PANTHER" id="PTHR30474">
    <property type="entry name" value="CELL CYCLE PROTEIN"/>
    <property type="match status" value="1"/>
</dbReference>
<dbReference type="PANTHER" id="PTHR30474:SF2">
    <property type="entry name" value="PEPTIDOGLYCAN GLYCOSYLTRANSFERASE FTSW-RELATED"/>
    <property type="match status" value="1"/>
</dbReference>
<dbReference type="Pfam" id="PF01098">
    <property type="entry name" value="FTSW_RODA_SPOVE"/>
    <property type="match status" value="1"/>
</dbReference>
<dbReference type="PROSITE" id="PS00428">
    <property type="entry name" value="FTSW_RODA_SPOVE"/>
    <property type="match status" value="1"/>
</dbReference>